<keyword id="KW-0002">3D-structure</keyword>
<keyword id="KW-0131">Cell cycle</keyword>
<keyword id="KW-0132">Cell division</keyword>
<keyword id="KW-0217">Developmental protein</keyword>
<keyword id="KW-0539">Nucleus</keyword>
<keyword id="KW-1185">Reference proteome</keyword>
<protein>
    <recommendedName>
        <fullName>Protein downstream neighbor of son homolog</fullName>
    </recommendedName>
</protein>
<gene>
    <name evidence="1" type="primary">donson</name>
</gene>
<reference evidence="5" key="1">
    <citation type="submission" date="2004-10" db="EMBL/GenBank/DDBJ databases">
        <authorList>
            <consortium name="NIH - Xenopus Gene Collection (XGC) project"/>
        </authorList>
    </citation>
    <scope>NUCLEOTIDE SEQUENCE [LARGE SCALE MRNA]</scope>
    <source>
        <tissue evidence="5">Embryo</tissue>
    </source>
</reference>
<comment type="function">
    <text evidence="2">Replisome component that maintains genome stability by protecting stalled or damaged replication forks. After the induction of replication stress, required for the stabilization of stalled replication forks, the efficient activation of the intra-S-phase and G/2M cell-cycle checkpoints and the maintenance of genome stability.</text>
</comment>
<comment type="subunit">
    <text evidence="2">Component of the replisome complex.</text>
</comment>
<comment type="subcellular location">
    <subcellularLocation>
        <location evidence="2">Nucleus</location>
    </subcellularLocation>
    <text evidence="2">Localizes at DNA replication sites.</text>
</comment>
<comment type="similarity">
    <text evidence="3">Belongs to the DONSON family.</text>
</comment>
<feature type="chain" id="PRO_0000236812" description="Protein downstream neighbor of son homolog">
    <location>
        <begin position="1"/>
        <end position="579"/>
    </location>
</feature>
<feature type="region of interest" description="Disordered" evidence="4">
    <location>
        <begin position="1"/>
        <end position="68"/>
    </location>
</feature>
<feature type="region of interest" description="Disordered" evidence="4">
    <location>
        <begin position="331"/>
        <end position="379"/>
    </location>
</feature>
<feature type="compositionally biased region" description="Basic and acidic residues" evidence="4">
    <location>
        <begin position="339"/>
        <end position="348"/>
    </location>
</feature>
<feature type="compositionally biased region" description="Acidic residues" evidence="4">
    <location>
        <begin position="365"/>
        <end position="378"/>
    </location>
</feature>
<feature type="helix" evidence="6">
    <location>
        <begin position="15"/>
        <end position="21"/>
    </location>
</feature>
<feature type="strand" evidence="6">
    <location>
        <begin position="156"/>
        <end position="158"/>
    </location>
</feature>
<feature type="strand" evidence="6">
    <location>
        <begin position="166"/>
        <end position="172"/>
    </location>
</feature>
<feature type="helix" evidence="6">
    <location>
        <begin position="178"/>
        <end position="180"/>
    </location>
</feature>
<feature type="helix" evidence="6">
    <location>
        <begin position="185"/>
        <end position="196"/>
    </location>
</feature>
<feature type="helix" evidence="6">
    <location>
        <begin position="210"/>
        <end position="212"/>
    </location>
</feature>
<feature type="helix" evidence="6">
    <location>
        <begin position="214"/>
        <end position="223"/>
    </location>
</feature>
<feature type="strand" evidence="6">
    <location>
        <begin position="225"/>
        <end position="229"/>
    </location>
</feature>
<feature type="helix" evidence="6">
    <location>
        <begin position="253"/>
        <end position="255"/>
    </location>
</feature>
<feature type="helix" evidence="6">
    <location>
        <begin position="259"/>
        <end position="280"/>
    </location>
</feature>
<feature type="strand" evidence="6">
    <location>
        <begin position="286"/>
        <end position="290"/>
    </location>
</feature>
<feature type="strand" evidence="6">
    <location>
        <begin position="295"/>
        <end position="299"/>
    </location>
</feature>
<feature type="helix" evidence="6">
    <location>
        <begin position="303"/>
        <end position="305"/>
    </location>
</feature>
<feature type="strand" evidence="6">
    <location>
        <begin position="310"/>
        <end position="315"/>
    </location>
</feature>
<feature type="helix" evidence="6">
    <location>
        <begin position="318"/>
        <end position="325"/>
    </location>
</feature>
<feature type="turn" evidence="6">
    <location>
        <begin position="326"/>
        <end position="328"/>
    </location>
</feature>
<feature type="helix" evidence="6">
    <location>
        <begin position="396"/>
        <end position="407"/>
    </location>
</feature>
<feature type="helix" evidence="6">
    <location>
        <begin position="414"/>
        <end position="416"/>
    </location>
</feature>
<feature type="strand" evidence="6">
    <location>
        <begin position="418"/>
        <end position="421"/>
    </location>
</feature>
<feature type="helix" evidence="6">
    <location>
        <begin position="424"/>
        <end position="434"/>
    </location>
</feature>
<feature type="strand" evidence="6">
    <location>
        <begin position="436"/>
        <end position="443"/>
    </location>
</feature>
<feature type="strand" evidence="6">
    <location>
        <begin position="451"/>
        <end position="456"/>
    </location>
</feature>
<feature type="strand" evidence="6">
    <location>
        <begin position="462"/>
        <end position="465"/>
    </location>
</feature>
<feature type="strand" evidence="6">
    <location>
        <begin position="467"/>
        <end position="470"/>
    </location>
</feature>
<feature type="strand" evidence="6">
    <location>
        <begin position="486"/>
        <end position="493"/>
    </location>
</feature>
<feature type="helix" evidence="6">
    <location>
        <begin position="495"/>
        <end position="508"/>
    </location>
</feature>
<feature type="strand" evidence="6">
    <location>
        <begin position="511"/>
        <end position="519"/>
    </location>
</feature>
<feature type="helix" evidence="6">
    <location>
        <begin position="521"/>
        <end position="523"/>
    </location>
</feature>
<feature type="helix" evidence="6">
    <location>
        <begin position="525"/>
        <end position="527"/>
    </location>
</feature>
<feature type="helix" evidence="6">
    <location>
        <begin position="549"/>
        <end position="555"/>
    </location>
</feature>
<feature type="strand" evidence="6">
    <location>
        <begin position="568"/>
        <end position="572"/>
    </location>
</feature>
<feature type="strand" evidence="6">
    <location>
        <begin position="575"/>
        <end position="578"/>
    </location>
</feature>
<accession>Q5U4U4</accession>
<sequence>MAELLPGYSPSFKKPSEILRLSRRRSRSEASKTGLSPFSPGDVIKRVPGLRPFSPGPNKGAGVKRRNPFASLENTVCSPVKRRAETVAEYGAASLEPRALSAVRPSCLGQDSPEPPQFNSVEDVIWGDPLAADADPLVKTESPEKPAPACEIPKGSVTFPADWSLKTRLLFTSSHSFSWADHLKAQEEAQGLVMQCRATAVNLPHSIQEPKLSTDLRCAFQQSLVHWIHPSLPWVQLFPRIGVDRKMAGKNTPWSQDESLQQVLMSEWALSFTSLYNLLKAKLCPYFYVCTYQFTVLFRAAGLAGSDVITAVMSPTTRGLREAMKNEGITFSQPLVEDDTGKKQKKPEAASQGDINPEKENGTAEADEASDESDEDESFSWLEEMGVEDKIKKPDSISIKLRKEKNEVKLDHKPESVVLVKGTNTFTLLNFLINCKSIVAAAGLQAGLPPTLLSPVAFRGATMHALKARSVNVKTRVNSGYKDQFSLEITGPIMPHSLHSLTMLLQSAQRGSFSAGLYTHEPTAVFNTPIHSQAVKEISADLQNCGLHPCTVEQLTQVNELGKLSLRHLEMTDYRYTWK</sequence>
<name>DONS_XENLA</name>
<proteinExistence type="evidence at protein level"/>
<organism>
    <name type="scientific">Xenopus laevis</name>
    <name type="common">African clawed frog</name>
    <dbReference type="NCBI Taxonomy" id="8355"/>
    <lineage>
        <taxon>Eukaryota</taxon>
        <taxon>Metazoa</taxon>
        <taxon>Chordata</taxon>
        <taxon>Craniata</taxon>
        <taxon>Vertebrata</taxon>
        <taxon>Euteleostomi</taxon>
        <taxon>Amphibia</taxon>
        <taxon>Batrachia</taxon>
        <taxon>Anura</taxon>
        <taxon>Pipoidea</taxon>
        <taxon>Pipidae</taxon>
        <taxon>Xenopodinae</taxon>
        <taxon>Xenopus</taxon>
        <taxon>Xenopus</taxon>
    </lineage>
</organism>
<evidence type="ECO:0000250" key="1">
    <source>
        <dbReference type="UniProtKB" id="Q6P1U0"/>
    </source>
</evidence>
<evidence type="ECO:0000250" key="2">
    <source>
        <dbReference type="UniProtKB" id="Q9NYP3"/>
    </source>
</evidence>
<evidence type="ECO:0000255" key="3"/>
<evidence type="ECO:0000256" key="4">
    <source>
        <dbReference type="SAM" id="MobiDB-lite"/>
    </source>
</evidence>
<evidence type="ECO:0000312" key="5">
    <source>
        <dbReference type="EMBL" id="AAH84950.1"/>
    </source>
</evidence>
<evidence type="ECO:0007829" key="6">
    <source>
        <dbReference type="PDB" id="8Q6O"/>
    </source>
</evidence>
<dbReference type="EMBL" id="BC084950">
    <property type="protein sequence ID" value="AAH84950.1"/>
    <property type="molecule type" value="mRNA"/>
</dbReference>
<dbReference type="RefSeq" id="NP_001088556.1">
    <property type="nucleotide sequence ID" value="NM_001095087.1"/>
</dbReference>
<dbReference type="PDB" id="8Q6O">
    <property type="method" value="EM"/>
    <property type="resolution" value="3.14 A"/>
    <property type="chains" value="L/R=1-579"/>
</dbReference>
<dbReference type="PDB" id="8Q6P">
    <property type="method" value="EM"/>
    <property type="resolution" value="3.53 A"/>
    <property type="chains" value="L=1-579"/>
</dbReference>
<dbReference type="PDBsum" id="8Q6O"/>
<dbReference type="PDBsum" id="8Q6P"/>
<dbReference type="EMDB" id="EMD-18191"/>
<dbReference type="EMDB" id="EMD-18192"/>
<dbReference type="SMR" id="Q5U4U4"/>
<dbReference type="DNASU" id="495432"/>
<dbReference type="GeneID" id="495432"/>
<dbReference type="KEGG" id="xla:495432"/>
<dbReference type="AGR" id="Xenbase:XB-GENE-1007407"/>
<dbReference type="CTD" id="495432"/>
<dbReference type="Xenbase" id="XB-GENE-1007407">
    <property type="gene designation" value="donson.L"/>
</dbReference>
<dbReference type="OrthoDB" id="534063at2759"/>
<dbReference type="Proteomes" id="UP000186698">
    <property type="component" value="Chromosome 2L"/>
</dbReference>
<dbReference type="Bgee" id="495432">
    <property type="expression patterns" value="Expressed in egg cell and 17 other cell types or tissues"/>
</dbReference>
<dbReference type="GO" id="GO:0005634">
    <property type="term" value="C:nucleus"/>
    <property type="evidence" value="ECO:0000250"/>
    <property type="project" value="UniProtKB"/>
</dbReference>
<dbReference type="GO" id="GO:0005657">
    <property type="term" value="C:replication fork"/>
    <property type="evidence" value="ECO:0000250"/>
    <property type="project" value="UniProtKB"/>
</dbReference>
<dbReference type="GO" id="GO:0030894">
    <property type="term" value="C:replisome"/>
    <property type="evidence" value="ECO:0000250"/>
    <property type="project" value="UniProtKB"/>
</dbReference>
<dbReference type="GO" id="GO:0051301">
    <property type="term" value="P:cell division"/>
    <property type="evidence" value="ECO:0007669"/>
    <property type="project" value="UniProtKB-KW"/>
</dbReference>
<dbReference type="GO" id="GO:0000077">
    <property type="term" value="P:DNA damage checkpoint signaling"/>
    <property type="evidence" value="ECO:0000250"/>
    <property type="project" value="UniProtKB"/>
</dbReference>
<dbReference type="GO" id="GO:0006260">
    <property type="term" value="P:DNA replication"/>
    <property type="evidence" value="ECO:0000250"/>
    <property type="project" value="UniProtKB"/>
</dbReference>
<dbReference type="GO" id="GO:0033314">
    <property type="term" value="P:mitotic DNA replication checkpoint signaling"/>
    <property type="evidence" value="ECO:0000250"/>
    <property type="project" value="UniProtKB"/>
</dbReference>
<dbReference type="GO" id="GO:0007095">
    <property type="term" value="P:mitotic G2 DNA damage checkpoint signaling"/>
    <property type="evidence" value="ECO:0000250"/>
    <property type="project" value="UniProtKB"/>
</dbReference>
<dbReference type="GO" id="GO:0033260">
    <property type="term" value="P:nuclear DNA replication"/>
    <property type="evidence" value="ECO:0000318"/>
    <property type="project" value="GO_Central"/>
</dbReference>
<dbReference type="GO" id="GO:0031297">
    <property type="term" value="P:replication fork processing"/>
    <property type="evidence" value="ECO:0000250"/>
    <property type="project" value="UniProtKB"/>
</dbReference>
<dbReference type="InterPro" id="IPR024861">
    <property type="entry name" value="Donson"/>
</dbReference>
<dbReference type="PANTHER" id="PTHR12972">
    <property type="entry name" value="DOWNSTREAM NEIGHBOR OF SON"/>
    <property type="match status" value="1"/>
</dbReference>
<dbReference type="PANTHER" id="PTHR12972:SF0">
    <property type="entry name" value="PROTEIN DOWNSTREAM NEIGHBOR OF SON"/>
    <property type="match status" value="1"/>
</dbReference>
<dbReference type="PRINTS" id="PR02064">
    <property type="entry name" value="DONSON"/>
</dbReference>